<name>UXAC_BACFN</name>
<proteinExistence type="inferred from homology"/>
<protein>
    <recommendedName>
        <fullName evidence="1">Uronate isomerase</fullName>
        <ecNumber evidence="1">5.3.1.12</ecNumber>
    </recommendedName>
    <alternativeName>
        <fullName evidence="1">Glucuronate isomerase</fullName>
    </alternativeName>
    <alternativeName>
        <fullName evidence="1">Uronic isomerase</fullName>
    </alternativeName>
</protein>
<feature type="chain" id="PRO_1000044761" description="Uronate isomerase">
    <location>
        <begin position="1"/>
        <end position="468"/>
    </location>
</feature>
<organism>
    <name type="scientific">Bacteroides fragilis (strain ATCC 25285 / DSM 2151 / CCUG 4856 / JCM 11019 / LMG 10263 / NCTC 9343 / Onslow / VPI 2553 / EN-2)</name>
    <dbReference type="NCBI Taxonomy" id="272559"/>
    <lineage>
        <taxon>Bacteria</taxon>
        <taxon>Pseudomonadati</taxon>
        <taxon>Bacteroidota</taxon>
        <taxon>Bacteroidia</taxon>
        <taxon>Bacteroidales</taxon>
        <taxon>Bacteroidaceae</taxon>
        <taxon>Bacteroides</taxon>
    </lineage>
</organism>
<keyword id="KW-0413">Isomerase</keyword>
<gene>
    <name evidence="1" type="primary">uxaC</name>
    <name type="ordered locus">BF2382</name>
</gene>
<accession>Q5LCT3</accession>
<comment type="catalytic activity">
    <reaction evidence="1">
        <text>D-glucuronate = D-fructuronate</text>
        <dbReference type="Rhea" id="RHEA:13049"/>
        <dbReference type="ChEBI" id="CHEBI:58720"/>
        <dbReference type="ChEBI" id="CHEBI:59863"/>
        <dbReference type="EC" id="5.3.1.12"/>
    </reaction>
</comment>
<comment type="catalytic activity">
    <reaction evidence="1">
        <text>aldehydo-D-galacturonate = keto-D-tagaturonate</text>
        <dbReference type="Rhea" id="RHEA:27702"/>
        <dbReference type="ChEBI" id="CHEBI:12952"/>
        <dbReference type="ChEBI" id="CHEBI:17886"/>
        <dbReference type="EC" id="5.3.1.12"/>
    </reaction>
</comment>
<comment type="pathway">
    <text evidence="1">Carbohydrate metabolism; pentose and glucuronate interconversion.</text>
</comment>
<comment type="similarity">
    <text evidence="1">Belongs to the metallo-dependent hydrolases superfamily. Uronate isomerase family.</text>
</comment>
<dbReference type="EC" id="5.3.1.12" evidence="1"/>
<dbReference type="EMBL" id="CR626927">
    <property type="protein sequence ID" value="CAH08080.1"/>
    <property type="molecule type" value="Genomic_DNA"/>
</dbReference>
<dbReference type="RefSeq" id="WP_005793937.1">
    <property type="nucleotide sequence ID" value="NZ_UFTH01000001.1"/>
</dbReference>
<dbReference type="SMR" id="Q5LCT3"/>
<dbReference type="PaxDb" id="272559-BF9343_2299"/>
<dbReference type="GeneID" id="60368070"/>
<dbReference type="KEGG" id="bfs:BF9343_2299"/>
<dbReference type="eggNOG" id="COG1904">
    <property type="taxonomic scope" value="Bacteria"/>
</dbReference>
<dbReference type="HOGENOM" id="CLU_044465_1_0_10"/>
<dbReference type="UniPathway" id="UPA00246"/>
<dbReference type="Proteomes" id="UP000006731">
    <property type="component" value="Chromosome"/>
</dbReference>
<dbReference type="GO" id="GO:0008880">
    <property type="term" value="F:glucuronate isomerase activity"/>
    <property type="evidence" value="ECO:0007669"/>
    <property type="project" value="UniProtKB-UniRule"/>
</dbReference>
<dbReference type="GO" id="GO:0019698">
    <property type="term" value="P:D-galacturonate catabolic process"/>
    <property type="evidence" value="ECO:0007669"/>
    <property type="project" value="TreeGrafter"/>
</dbReference>
<dbReference type="GO" id="GO:0042840">
    <property type="term" value="P:D-glucuronate catabolic process"/>
    <property type="evidence" value="ECO:0007669"/>
    <property type="project" value="TreeGrafter"/>
</dbReference>
<dbReference type="Gene3D" id="3.20.20.140">
    <property type="entry name" value="Metal-dependent hydrolases"/>
    <property type="match status" value="1"/>
</dbReference>
<dbReference type="Gene3D" id="1.10.2020.10">
    <property type="entry name" value="uronate isomerase, domain 2, chain A"/>
    <property type="match status" value="1"/>
</dbReference>
<dbReference type="HAMAP" id="MF_00675">
    <property type="entry name" value="UxaC"/>
    <property type="match status" value="1"/>
</dbReference>
<dbReference type="InterPro" id="IPR032466">
    <property type="entry name" value="Metal_Hydrolase"/>
</dbReference>
<dbReference type="InterPro" id="IPR003766">
    <property type="entry name" value="Uronate_isomerase"/>
</dbReference>
<dbReference type="NCBIfam" id="NF002794">
    <property type="entry name" value="PRK02925.1"/>
    <property type="match status" value="1"/>
</dbReference>
<dbReference type="PANTHER" id="PTHR30068">
    <property type="entry name" value="URONATE ISOMERASE"/>
    <property type="match status" value="1"/>
</dbReference>
<dbReference type="PANTHER" id="PTHR30068:SF4">
    <property type="entry name" value="URONATE ISOMERASE"/>
    <property type="match status" value="1"/>
</dbReference>
<dbReference type="Pfam" id="PF02614">
    <property type="entry name" value="UxaC"/>
    <property type="match status" value="1"/>
</dbReference>
<dbReference type="SUPFAM" id="SSF51556">
    <property type="entry name" value="Metallo-dependent hydrolases"/>
    <property type="match status" value="1"/>
</dbReference>
<evidence type="ECO:0000255" key="1">
    <source>
        <dbReference type="HAMAP-Rule" id="MF_00675"/>
    </source>
</evidence>
<sequence length="468" mass="54658">MKNFMDKNFLLQTETAQELYHNHAAKMPIIDYHCHLNPQMVADDYRFKSLTEIWLGGDHYKWRAMRSNGVDECFCTGKETSDWEKFEKWAETVPYTFRNPLYHWTHLELKTAFGIDKVLNPKTAREIYDECNEKLSSQEYSARGMMRRYHVETVCTTDDPIDSLEYHIRTRESGFEIKMLPTWRPDKVMAVEVPSDFRTYIEKLSEISEITISDYNDMILALRKRHDYFAEQGCKLSDHGIEEFYAEDYTEGEIKTIFNKIYGGSELTKEEVLKFKSAMLIVLGEMDWEKGWTQQFHYGAIRNNNSRMFKQLGPDTGFDSIGEFATAKAMSKFLDRLNSKGKLTKTILYNLNPCANEVIATMIGNFQDGSIPGKIQFGSGWWFLDQKDGMERQLNALSLLGLLSRFVGMLTDSRSFLSYPRHEYFRRTLCNLLGCDVENGEIPLSEMERVCQMVEDISYFNAKNFFHF</sequence>
<reference key="1">
    <citation type="journal article" date="2005" name="Science">
        <title>Extensive DNA inversions in the B. fragilis genome control variable gene expression.</title>
        <authorList>
            <person name="Cerdeno-Tarraga A.-M."/>
            <person name="Patrick S."/>
            <person name="Crossman L.C."/>
            <person name="Blakely G."/>
            <person name="Abratt V."/>
            <person name="Lennard N."/>
            <person name="Poxton I."/>
            <person name="Duerden B."/>
            <person name="Harris B."/>
            <person name="Quail M.A."/>
            <person name="Barron A."/>
            <person name="Clark L."/>
            <person name="Corton C."/>
            <person name="Doggett J."/>
            <person name="Holden M.T.G."/>
            <person name="Larke N."/>
            <person name="Line A."/>
            <person name="Lord A."/>
            <person name="Norbertczak H."/>
            <person name="Ormond D."/>
            <person name="Price C."/>
            <person name="Rabbinowitsch E."/>
            <person name="Woodward J."/>
            <person name="Barrell B.G."/>
            <person name="Parkhill J."/>
        </authorList>
    </citation>
    <scope>NUCLEOTIDE SEQUENCE [LARGE SCALE GENOMIC DNA]</scope>
    <source>
        <strain>ATCC 25285 / DSM 2151 / CCUG 4856 / JCM 11019 / LMG 10263 / NCTC 9343 / Onslow / VPI 2553 / EN-2</strain>
    </source>
</reference>